<name>AGUA_LEGPH</name>
<evidence type="ECO:0000255" key="1">
    <source>
        <dbReference type="HAMAP-Rule" id="MF_01841"/>
    </source>
</evidence>
<keyword id="KW-0378">Hydrolase</keyword>
<keyword id="KW-1185">Reference proteome</keyword>
<gene>
    <name evidence="1" type="primary">aguA</name>
    <name type="ordered locus">lpg0005</name>
</gene>
<dbReference type="EC" id="3.5.3.12" evidence="1"/>
<dbReference type="EMBL" id="AE017354">
    <property type="protein sequence ID" value="AAU26113.1"/>
    <property type="molecule type" value="Genomic_DNA"/>
</dbReference>
<dbReference type="RefSeq" id="YP_094060.1">
    <property type="nucleotide sequence ID" value="NC_002942.5"/>
</dbReference>
<dbReference type="SMR" id="Q5ZZK4"/>
<dbReference type="STRING" id="272624.lpg0005"/>
<dbReference type="PaxDb" id="272624-lpg0005"/>
<dbReference type="KEGG" id="lpn:lpg0005"/>
<dbReference type="PATRIC" id="fig|272624.6.peg.5"/>
<dbReference type="eggNOG" id="COG2957">
    <property type="taxonomic scope" value="Bacteria"/>
</dbReference>
<dbReference type="HOGENOM" id="CLU_037682_0_0_6"/>
<dbReference type="OrthoDB" id="9808013at2"/>
<dbReference type="Proteomes" id="UP000000609">
    <property type="component" value="Chromosome"/>
</dbReference>
<dbReference type="GO" id="GO:0047632">
    <property type="term" value="F:agmatine deiminase activity"/>
    <property type="evidence" value="ECO:0007669"/>
    <property type="project" value="UniProtKB-UniRule"/>
</dbReference>
<dbReference type="GO" id="GO:0004668">
    <property type="term" value="F:protein-arginine deiminase activity"/>
    <property type="evidence" value="ECO:0007669"/>
    <property type="project" value="InterPro"/>
</dbReference>
<dbReference type="GO" id="GO:0009446">
    <property type="term" value="P:putrescine biosynthetic process"/>
    <property type="evidence" value="ECO:0007669"/>
    <property type="project" value="InterPro"/>
</dbReference>
<dbReference type="Gene3D" id="3.75.10.10">
    <property type="entry name" value="L-arginine/glycine Amidinotransferase, Chain A"/>
    <property type="match status" value="1"/>
</dbReference>
<dbReference type="HAMAP" id="MF_01841">
    <property type="entry name" value="Agmatine_deimin"/>
    <property type="match status" value="1"/>
</dbReference>
<dbReference type="InterPro" id="IPR017754">
    <property type="entry name" value="Agmatine_deiminase"/>
</dbReference>
<dbReference type="InterPro" id="IPR007466">
    <property type="entry name" value="Peptidyl-Arg-deiminase_porph"/>
</dbReference>
<dbReference type="PANTHER" id="PTHR31377">
    <property type="entry name" value="AGMATINE DEIMINASE-RELATED"/>
    <property type="match status" value="1"/>
</dbReference>
<dbReference type="PANTHER" id="PTHR31377:SF0">
    <property type="entry name" value="AGMATINE DEIMINASE-RELATED"/>
    <property type="match status" value="1"/>
</dbReference>
<dbReference type="Pfam" id="PF04371">
    <property type="entry name" value="PAD_porph"/>
    <property type="match status" value="1"/>
</dbReference>
<dbReference type="SUPFAM" id="SSF55909">
    <property type="entry name" value="Pentein"/>
    <property type="match status" value="1"/>
</dbReference>
<proteinExistence type="inferred from homology"/>
<reference key="1">
    <citation type="journal article" date="2004" name="Science">
        <title>The genomic sequence of the accidental pathogen Legionella pneumophila.</title>
        <authorList>
            <person name="Chien M."/>
            <person name="Morozova I."/>
            <person name="Shi S."/>
            <person name="Sheng H."/>
            <person name="Chen J."/>
            <person name="Gomez S.M."/>
            <person name="Asamani G."/>
            <person name="Hill K."/>
            <person name="Nuara J."/>
            <person name="Feder M."/>
            <person name="Rineer J."/>
            <person name="Greenberg J.J."/>
            <person name="Steshenko V."/>
            <person name="Park S.H."/>
            <person name="Zhao B."/>
            <person name="Teplitskaya E."/>
            <person name="Edwards J.R."/>
            <person name="Pampou S."/>
            <person name="Georghiou A."/>
            <person name="Chou I.-C."/>
            <person name="Iannuccilli W."/>
            <person name="Ulz M.E."/>
            <person name="Kim D.H."/>
            <person name="Geringer-Sameth A."/>
            <person name="Goldsberry C."/>
            <person name="Morozov P."/>
            <person name="Fischer S.G."/>
            <person name="Segal G."/>
            <person name="Qu X."/>
            <person name="Rzhetsky A."/>
            <person name="Zhang P."/>
            <person name="Cayanis E."/>
            <person name="De Jong P.J."/>
            <person name="Ju J."/>
            <person name="Kalachikov S."/>
            <person name="Shuman H.A."/>
            <person name="Russo J.J."/>
        </authorList>
    </citation>
    <scope>NUCLEOTIDE SEQUENCE [LARGE SCALE GENOMIC DNA]</scope>
    <source>
        <strain>Philadelphia 1 / ATCC 33152 / DSM 7513</strain>
    </source>
</reference>
<comment type="catalytic activity">
    <reaction evidence="1">
        <text>agmatine + H2O = N-carbamoylputrescine + NH4(+)</text>
        <dbReference type="Rhea" id="RHEA:18037"/>
        <dbReference type="ChEBI" id="CHEBI:15377"/>
        <dbReference type="ChEBI" id="CHEBI:28938"/>
        <dbReference type="ChEBI" id="CHEBI:58145"/>
        <dbReference type="ChEBI" id="CHEBI:58318"/>
        <dbReference type="EC" id="3.5.3.12"/>
    </reaction>
</comment>
<comment type="similarity">
    <text evidence="1">Belongs to the agmatine deiminase family.</text>
</comment>
<organism>
    <name type="scientific">Legionella pneumophila subsp. pneumophila (strain Philadelphia 1 / ATCC 33152 / DSM 7513)</name>
    <dbReference type="NCBI Taxonomy" id="272624"/>
    <lineage>
        <taxon>Bacteria</taxon>
        <taxon>Pseudomonadati</taxon>
        <taxon>Pseudomonadota</taxon>
        <taxon>Gammaproteobacteria</taxon>
        <taxon>Legionellales</taxon>
        <taxon>Legionellaceae</taxon>
        <taxon>Legionella</taxon>
    </lineage>
</organism>
<accession>Q5ZZK4</accession>
<protein>
    <recommendedName>
        <fullName evidence="1">Putative agmatine deiminase</fullName>
        <ecNumber evidence="1">3.5.3.12</ecNumber>
    </recommendedName>
    <alternativeName>
        <fullName evidence="1">Agmatine iminohydrolase</fullName>
    </alternativeName>
</protein>
<feature type="chain" id="PRO_0000194329" description="Putative agmatine deiminase">
    <location>
        <begin position="1"/>
        <end position="348"/>
    </location>
</feature>
<feature type="active site" description="Amidino-cysteine intermediate" evidence="1">
    <location>
        <position position="335"/>
    </location>
</feature>
<sequence length="348" mass="39479">MNMNTAPKQYGFYMPAEWYPHERCWMAWPCHHETWSKIGLDKAKMAYARVAKAIAQFEPVTLLVNPGDEDSAENLCKGHNIEIISLPINDSWTRDTGATFLINNERQLAGVDWIHNAWGGNYADCSLDNLIASHLIKYTEAQYFHAPLVMEGGSFHVDGEGTILTSKECLLNSNRNPHLSQQEIEQYLINYLGAERIIWLNMGLIGDETDGHVDEIATFIAPGKVLCLITKDKEDPNYHRLQENFEILKSSKDARGRTFEVYTVEQPPATYLNGERLTLSYINFYMANQGIVMPAFGYESFDRLAYQLFVQIFPGYQITQIDALDVFSGGGGIHCITQQQPKSHKLVE</sequence>